<feature type="chain" id="PRO_0000213698" description="Zinc transporter YKE4">
    <location>
        <begin position="1"/>
        <end position="346"/>
    </location>
</feature>
<feature type="topological domain" description="Extracellular" evidence="1">
    <location>
        <begin position="1"/>
        <end position="2"/>
    </location>
</feature>
<feature type="transmembrane region" description="Helical" evidence="1">
    <location>
        <begin position="3"/>
        <end position="23"/>
    </location>
</feature>
<feature type="topological domain" description="Cytoplasmic" evidence="1">
    <location>
        <begin position="24"/>
        <end position="69"/>
    </location>
</feature>
<feature type="transmembrane region" description="Helical" evidence="1">
    <location>
        <begin position="70"/>
        <end position="90"/>
    </location>
</feature>
<feature type="topological domain" description="Extracellular" evidence="1">
    <location>
        <begin position="91"/>
        <end position="99"/>
    </location>
</feature>
<feature type="transmembrane region" description="Helical" evidence="1">
    <location>
        <begin position="100"/>
        <end position="120"/>
    </location>
</feature>
<feature type="topological domain" description="Cytoplasmic" evidence="1">
    <location>
        <begin position="121"/>
        <end position="126"/>
    </location>
</feature>
<feature type="transmembrane region" description="Helical" evidence="1">
    <location>
        <begin position="127"/>
        <end position="147"/>
    </location>
</feature>
<feature type="topological domain" description="Extracellular" evidence="1">
    <location>
        <begin position="148"/>
        <end position="202"/>
    </location>
</feature>
<feature type="transmembrane region" description="Helical" evidence="1">
    <location>
        <begin position="203"/>
        <end position="223"/>
    </location>
</feature>
<feature type="topological domain" description="Cytoplasmic" evidence="1">
    <location>
        <begin position="224"/>
        <end position="252"/>
    </location>
</feature>
<feature type="transmembrane region" description="Helical" evidence="1">
    <location>
        <begin position="253"/>
        <end position="273"/>
    </location>
</feature>
<feature type="topological domain" description="Extracellular" evidence="1">
    <location>
        <begin position="274"/>
        <end position="290"/>
    </location>
</feature>
<feature type="transmembrane region" description="Helical" evidence="1">
    <location>
        <begin position="291"/>
        <end position="311"/>
    </location>
</feature>
<feature type="topological domain" description="Cytoplasmic" evidence="1">
    <location>
        <begin position="312"/>
        <end position="322"/>
    </location>
</feature>
<feature type="transmembrane region" description="Helical" evidence="1">
    <location>
        <begin position="323"/>
        <end position="343"/>
    </location>
</feature>
<feature type="topological domain" description="Extracellular" evidence="1">
    <location>
        <begin position="344"/>
        <end position="346"/>
    </location>
</feature>
<feature type="glycosylation site" description="N-linked (GlcNAc...) asparagine" evidence="1">
    <location>
        <position position="184"/>
    </location>
</feature>
<feature type="glycosylation site" description="N-linked (GlcNAc...) asparagine" evidence="1">
    <location>
        <position position="274"/>
    </location>
</feature>
<feature type="glycosylation site" description="N-linked (GlcNAc...) asparagine" evidence="1">
    <location>
        <position position="285"/>
    </location>
</feature>
<keyword id="KW-0256">Endoplasmic reticulum</keyword>
<keyword id="KW-0325">Glycoprotein</keyword>
<keyword id="KW-0406">Ion transport</keyword>
<keyword id="KW-0472">Membrane</keyword>
<keyword id="KW-1185">Reference proteome</keyword>
<keyword id="KW-0812">Transmembrane</keyword>
<keyword id="KW-1133">Transmembrane helix</keyword>
<keyword id="KW-0813">Transport</keyword>
<keyword id="KW-0862">Zinc</keyword>
<keyword id="KW-0864">Zinc transport</keyword>
<reference key="1">
    <citation type="journal article" date="1997" name="Nature">
        <title>The nucleotide sequence of Saccharomyces cerevisiae chromosome IX.</title>
        <authorList>
            <person name="Churcher C.M."/>
            <person name="Bowman S."/>
            <person name="Badcock K."/>
            <person name="Bankier A.T."/>
            <person name="Brown D."/>
            <person name="Chillingworth T."/>
            <person name="Connor R."/>
            <person name="Devlin K."/>
            <person name="Gentles S."/>
            <person name="Hamlin N."/>
            <person name="Harris D.E."/>
            <person name="Horsnell T."/>
            <person name="Hunt S."/>
            <person name="Jagels K."/>
            <person name="Jones M."/>
            <person name="Lye G."/>
            <person name="Moule S."/>
            <person name="Odell C."/>
            <person name="Pearson D."/>
            <person name="Rajandream M.A."/>
            <person name="Rice P."/>
            <person name="Rowley N."/>
            <person name="Skelton J."/>
            <person name="Smith V."/>
            <person name="Walsh S.V."/>
            <person name="Whitehead S."/>
            <person name="Barrell B.G."/>
        </authorList>
    </citation>
    <scope>NUCLEOTIDE SEQUENCE [LARGE SCALE GENOMIC DNA]</scope>
    <source>
        <strain>ATCC 204508 / S288c</strain>
    </source>
</reference>
<reference key="2">
    <citation type="journal article" date="2014" name="G3 (Bethesda)">
        <title>The reference genome sequence of Saccharomyces cerevisiae: Then and now.</title>
        <authorList>
            <person name="Engel S.R."/>
            <person name="Dietrich F.S."/>
            <person name="Fisk D.G."/>
            <person name="Binkley G."/>
            <person name="Balakrishnan R."/>
            <person name="Costanzo M.C."/>
            <person name="Dwight S.S."/>
            <person name="Hitz B.C."/>
            <person name="Karra K."/>
            <person name="Nash R.S."/>
            <person name="Weng S."/>
            <person name="Wong E.D."/>
            <person name="Lloyd P."/>
            <person name="Skrzypek M.S."/>
            <person name="Miyasato S.R."/>
            <person name="Simison M."/>
            <person name="Cherry J.M."/>
        </authorList>
    </citation>
    <scope>GENOME REANNOTATION</scope>
    <source>
        <strain>ATCC 204508 / S288c</strain>
    </source>
</reference>
<reference key="3">
    <citation type="journal article" date="2006" name="J. Biol. Chem.">
        <title>YKE4 (YIL023C) encodes a bidirectional zinc transporter in the endoplasmic reticulum of Saccharomyces cerevisiae.</title>
        <authorList>
            <person name="Kumanovics A."/>
            <person name="Poruk K.E."/>
            <person name="Osborn K.A."/>
            <person name="Ward D.M."/>
            <person name="Kaplan J."/>
        </authorList>
    </citation>
    <scope>FUNCTION</scope>
    <scope>SUBCELLULAR LOCATION</scope>
</reference>
<reference key="4">
    <citation type="journal article" date="2006" name="Proc. Natl. Acad. Sci. U.S.A.">
        <title>A global topology map of the Saccharomyces cerevisiae membrane proteome.</title>
        <authorList>
            <person name="Kim H."/>
            <person name="Melen K."/>
            <person name="Oesterberg M."/>
            <person name="von Heijne G."/>
        </authorList>
    </citation>
    <scope>TOPOLOGY [LARGE SCALE ANALYSIS]</scope>
    <source>
        <strain>ATCC 208353 / W303-1A</strain>
    </source>
</reference>
<protein>
    <recommendedName>
        <fullName>Zinc transporter YKE4</fullName>
    </recommendedName>
</protein>
<gene>
    <name type="primary">YKE4</name>
    <name type="ordered locus">YIL023C</name>
</gene>
<name>YKE4_YEAST</name>
<proteinExistence type="evidence at protein level"/>
<sequence>MKASHICSYLLSIAPLVVSHGVHHNRDHGHEANHESKQSFLILKQESIFYSLVCFLQNHLFVLGPRYNAIVAILIIQLMPCLFVLFVPGLRKNDRASLTLSLLVSFSLGTLLGDILLHVIPESLSGVTDVTMVGGAIFLGFISFLTLDKTMRILSGTSNDDGSIHSHSHSHTPQQTAEKKAGFNMSAYLNVISGIAHHITDGIALATSFYSSTQVGIMTSIAVTFHEIPHELGDFAILLSSGFTFPQAIRAQAVTAFGAVVGTSIGCWMNEIGNNSHKATSSSANASELMLPFTAGGLIYIATTSVVPQILHSSAPDSKLREFKKWALQLVFIFVGFAVMALMDEH</sequence>
<comment type="function">
    <text evidence="2">Zinc transporter whose role depends on the zinc status of the cells. It helps to balance zinc levels between the cytosol and the secretory pathway. It transports zinc into the secretory pathway in a zinc-adequate environment and in a high zinc medium. In high zinc medium, transport of zinc into the secretory pathway is a way to eliminate zinc from the cytosol. Under low cytosolic zinc conditions, it removes zinc from the secretory pathway and acts as a zinc importer that helps to alleviate ER stress.</text>
</comment>
<comment type="subcellular location">
    <subcellularLocation>
        <location evidence="2">Endoplasmic reticulum membrane</location>
        <topology evidence="2">Multi-pass membrane protein</topology>
    </subcellularLocation>
</comment>
<comment type="similarity">
    <text evidence="3">Belongs to the ZIP transporter (TC 2.A.5) family. KE4/Catsup subfamily.</text>
</comment>
<organism>
    <name type="scientific">Saccharomyces cerevisiae (strain ATCC 204508 / S288c)</name>
    <name type="common">Baker's yeast</name>
    <dbReference type="NCBI Taxonomy" id="559292"/>
    <lineage>
        <taxon>Eukaryota</taxon>
        <taxon>Fungi</taxon>
        <taxon>Dikarya</taxon>
        <taxon>Ascomycota</taxon>
        <taxon>Saccharomycotina</taxon>
        <taxon>Saccharomycetes</taxon>
        <taxon>Saccharomycetales</taxon>
        <taxon>Saccharomycetaceae</taxon>
        <taxon>Saccharomyces</taxon>
    </lineage>
</organism>
<dbReference type="EMBL" id="Z46881">
    <property type="protein sequence ID" value="CAA86969.1"/>
    <property type="molecule type" value="Genomic_DNA"/>
</dbReference>
<dbReference type="EMBL" id="BK006942">
    <property type="protein sequence ID" value="DAA08522.1"/>
    <property type="molecule type" value="Genomic_DNA"/>
</dbReference>
<dbReference type="PIR" id="S49959">
    <property type="entry name" value="S49959"/>
</dbReference>
<dbReference type="RefSeq" id="NP_012241.1">
    <property type="nucleotide sequence ID" value="NM_001179373.1"/>
</dbReference>
<dbReference type="SMR" id="P40544"/>
<dbReference type="BioGRID" id="34965">
    <property type="interactions" value="56"/>
</dbReference>
<dbReference type="DIP" id="DIP-5638N"/>
<dbReference type="FunCoup" id="P40544">
    <property type="interactions" value="221"/>
</dbReference>
<dbReference type="STRING" id="4932.YIL023C"/>
<dbReference type="TCDB" id="2.A.5.4.4">
    <property type="family name" value="the zinc (zn(2+))-iron (fe(2+)) permease (zip) family"/>
</dbReference>
<dbReference type="GlyCosmos" id="P40544">
    <property type="glycosylation" value="3 sites, No reported glycans"/>
</dbReference>
<dbReference type="GlyGen" id="P40544">
    <property type="glycosylation" value="3 sites"/>
</dbReference>
<dbReference type="PaxDb" id="4932-YIL023C"/>
<dbReference type="PeptideAtlas" id="P40544"/>
<dbReference type="EnsemblFungi" id="YIL023C_mRNA">
    <property type="protein sequence ID" value="YIL023C"/>
    <property type="gene ID" value="YIL023C"/>
</dbReference>
<dbReference type="GeneID" id="854789"/>
<dbReference type="KEGG" id="sce:YIL023C"/>
<dbReference type="AGR" id="SGD:S000001285"/>
<dbReference type="SGD" id="S000001285">
    <property type="gene designation" value="YKE4"/>
</dbReference>
<dbReference type="VEuPathDB" id="FungiDB:YIL023C"/>
<dbReference type="eggNOG" id="KOG2693">
    <property type="taxonomic scope" value="Eukaryota"/>
</dbReference>
<dbReference type="GeneTree" id="ENSGT00940000157349"/>
<dbReference type="HOGENOM" id="CLU_015114_0_0_1"/>
<dbReference type="InParanoid" id="P40544"/>
<dbReference type="OMA" id="HEVPHHI"/>
<dbReference type="OrthoDB" id="200954at2759"/>
<dbReference type="BioCyc" id="YEAST:G3O-31298-MONOMER"/>
<dbReference type="Reactome" id="R-SCE-442380">
    <property type="pathway name" value="Zinc influx into cells by the SLC39 gene family"/>
</dbReference>
<dbReference type="BioGRID-ORCS" id="854789">
    <property type="hits" value="0 hits in 10 CRISPR screens"/>
</dbReference>
<dbReference type="PRO" id="PR:P40544"/>
<dbReference type="Proteomes" id="UP000002311">
    <property type="component" value="Chromosome IX"/>
</dbReference>
<dbReference type="RNAct" id="P40544">
    <property type="molecule type" value="protein"/>
</dbReference>
<dbReference type="GO" id="GO:0005783">
    <property type="term" value="C:endoplasmic reticulum"/>
    <property type="evidence" value="ECO:0000314"/>
    <property type="project" value="SGD"/>
</dbReference>
<dbReference type="GO" id="GO:0005789">
    <property type="term" value="C:endoplasmic reticulum membrane"/>
    <property type="evidence" value="ECO:0007669"/>
    <property type="project" value="UniProtKB-SubCell"/>
</dbReference>
<dbReference type="GO" id="GO:0005385">
    <property type="term" value="F:zinc ion transmembrane transporter activity"/>
    <property type="evidence" value="ECO:0000315"/>
    <property type="project" value="SGD"/>
</dbReference>
<dbReference type="GO" id="GO:0006882">
    <property type="term" value="P:intracellular zinc ion homeostasis"/>
    <property type="evidence" value="ECO:0000318"/>
    <property type="project" value="GO_Central"/>
</dbReference>
<dbReference type="GO" id="GO:0071577">
    <property type="term" value="P:zinc ion transmembrane transport"/>
    <property type="evidence" value="ECO:0000318"/>
    <property type="project" value="GO_Central"/>
</dbReference>
<dbReference type="GO" id="GO:0006829">
    <property type="term" value="P:zinc ion transport"/>
    <property type="evidence" value="ECO:0000315"/>
    <property type="project" value="SGD"/>
</dbReference>
<dbReference type="InterPro" id="IPR003689">
    <property type="entry name" value="ZIP"/>
</dbReference>
<dbReference type="PANTHER" id="PTHR16950">
    <property type="entry name" value="ZINC TRANSPORTER SLC39A7 HISTIDINE-RICH MEMBRANE PROTEIN KE4"/>
    <property type="match status" value="1"/>
</dbReference>
<dbReference type="PANTHER" id="PTHR16950:SF16">
    <property type="entry name" value="ZINC TRANSPORTER ZIP13"/>
    <property type="match status" value="1"/>
</dbReference>
<dbReference type="Pfam" id="PF02535">
    <property type="entry name" value="Zip"/>
    <property type="match status" value="1"/>
</dbReference>
<accession>P40544</accession>
<accession>D6VVQ6</accession>
<evidence type="ECO:0000255" key="1"/>
<evidence type="ECO:0000269" key="2">
    <source>
    </source>
</evidence>
<evidence type="ECO:0000305" key="3"/>